<keyword id="KW-0963">Cytoplasm</keyword>
<keyword id="KW-0501">Molybdenum cofactor biosynthesis</keyword>
<keyword id="KW-1185">Reference proteome</keyword>
<protein>
    <recommendedName>
        <fullName evidence="1">Sulfur carrier protein FdhD</fullName>
    </recommendedName>
</protein>
<dbReference type="EMBL" id="AL123456">
    <property type="protein sequence ID" value="CCP45701.1"/>
    <property type="molecule type" value="Genomic_DNA"/>
</dbReference>
<dbReference type="PIR" id="F70926">
    <property type="entry name" value="F70926"/>
</dbReference>
<dbReference type="RefSeq" id="NP_217415.1">
    <property type="nucleotide sequence ID" value="NC_000962.3"/>
</dbReference>
<dbReference type="RefSeq" id="WP_003414705.1">
    <property type="nucleotide sequence ID" value="NZ_NVQJ01000006.1"/>
</dbReference>
<dbReference type="SMR" id="P9WNF1"/>
<dbReference type="FunCoup" id="P9WNF1">
    <property type="interactions" value="5"/>
</dbReference>
<dbReference type="STRING" id="83332.Rv2899c"/>
<dbReference type="PaxDb" id="83332-Rv2899c"/>
<dbReference type="DNASU" id="888201"/>
<dbReference type="GeneID" id="45426886"/>
<dbReference type="GeneID" id="888201"/>
<dbReference type="KEGG" id="mtu:Rv2899c"/>
<dbReference type="KEGG" id="mtv:RVBD_2899c"/>
<dbReference type="TubercuList" id="Rv2899c"/>
<dbReference type="eggNOG" id="COG1526">
    <property type="taxonomic scope" value="Bacteria"/>
</dbReference>
<dbReference type="InParanoid" id="P9WNF1"/>
<dbReference type="OrthoDB" id="3197277at2"/>
<dbReference type="PhylomeDB" id="P9WNF1"/>
<dbReference type="Proteomes" id="UP000001584">
    <property type="component" value="Chromosome"/>
</dbReference>
<dbReference type="GO" id="GO:0005737">
    <property type="term" value="C:cytoplasm"/>
    <property type="evidence" value="ECO:0007669"/>
    <property type="project" value="UniProtKB-SubCell"/>
</dbReference>
<dbReference type="GO" id="GO:0097163">
    <property type="term" value="F:sulfur carrier activity"/>
    <property type="evidence" value="ECO:0007669"/>
    <property type="project" value="UniProtKB-UniRule"/>
</dbReference>
<dbReference type="GO" id="GO:0016783">
    <property type="term" value="F:sulfurtransferase activity"/>
    <property type="evidence" value="ECO:0007669"/>
    <property type="project" value="InterPro"/>
</dbReference>
<dbReference type="GO" id="GO:0006777">
    <property type="term" value="P:Mo-molybdopterin cofactor biosynthetic process"/>
    <property type="evidence" value="ECO:0007669"/>
    <property type="project" value="UniProtKB-UniRule"/>
</dbReference>
<dbReference type="Gene3D" id="3.10.20.10">
    <property type="match status" value="1"/>
</dbReference>
<dbReference type="Gene3D" id="3.40.140.10">
    <property type="entry name" value="Cytidine Deaminase, domain 2"/>
    <property type="match status" value="1"/>
</dbReference>
<dbReference type="HAMAP" id="MF_00187">
    <property type="entry name" value="FdhD"/>
    <property type="match status" value="1"/>
</dbReference>
<dbReference type="InterPro" id="IPR016193">
    <property type="entry name" value="Cytidine_deaminase-like"/>
</dbReference>
<dbReference type="InterPro" id="IPR003786">
    <property type="entry name" value="FdhD"/>
</dbReference>
<dbReference type="NCBIfam" id="TIGR00129">
    <property type="entry name" value="fdhD_narQ"/>
    <property type="match status" value="1"/>
</dbReference>
<dbReference type="NCBIfam" id="NF001943">
    <property type="entry name" value="PRK00724.1-2"/>
    <property type="match status" value="1"/>
</dbReference>
<dbReference type="PANTHER" id="PTHR30592">
    <property type="entry name" value="FORMATE DEHYDROGENASE"/>
    <property type="match status" value="1"/>
</dbReference>
<dbReference type="PANTHER" id="PTHR30592:SF1">
    <property type="entry name" value="SULFUR CARRIER PROTEIN FDHD"/>
    <property type="match status" value="1"/>
</dbReference>
<dbReference type="Pfam" id="PF02634">
    <property type="entry name" value="FdhD-NarQ"/>
    <property type="match status" value="1"/>
</dbReference>
<dbReference type="PIRSF" id="PIRSF015626">
    <property type="entry name" value="FdhD"/>
    <property type="match status" value="1"/>
</dbReference>
<dbReference type="SUPFAM" id="SSF53927">
    <property type="entry name" value="Cytidine deaminase-like"/>
    <property type="match status" value="1"/>
</dbReference>
<organism>
    <name type="scientific">Mycobacterium tuberculosis (strain ATCC 25618 / H37Rv)</name>
    <dbReference type="NCBI Taxonomy" id="83332"/>
    <lineage>
        <taxon>Bacteria</taxon>
        <taxon>Bacillati</taxon>
        <taxon>Actinomycetota</taxon>
        <taxon>Actinomycetes</taxon>
        <taxon>Mycobacteriales</taxon>
        <taxon>Mycobacteriaceae</taxon>
        <taxon>Mycobacterium</taxon>
        <taxon>Mycobacterium tuberculosis complex</taxon>
    </lineage>
</organism>
<sequence>MGYATAHRRVRHLSADQVITRPETLAVEEPLEIRVNGTPVTVTMRTPGSDFELVQGFLLAEGVVAHREDVLTVSYCGRRVEGNATGASTYNVLDVALAPGVKPPDVDVTRTFYTTSSCGVCGKASLQAVSQVSRFAPGGDPATVAADTLKAMPDQLRRAQKVFARTGGLHAAALFGVDGAMLAVREDIGRHNAVDKVIGWAFERDRIPLGASVLLVSGRASFELTQKALMAGIPVLAAVSAPSSLAVSLADASGITLVAFLRGDSMNVYTRADRIT</sequence>
<reference key="1">
    <citation type="journal article" date="1998" name="Nature">
        <title>Deciphering the biology of Mycobacterium tuberculosis from the complete genome sequence.</title>
        <authorList>
            <person name="Cole S.T."/>
            <person name="Brosch R."/>
            <person name="Parkhill J."/>
            <person name="Garnier T."/>
            <person name="Churcher C.M."/>
            <person name="Harris D.E."/>
            <person name="Gordon S.V."/>
            <person name="Eiglmeier K."/>
            <person name="Gas S."/>
            <person name="Barry C.E. III"/>
            <person name="Tekaia F."/>
            <person name="Badcock K."/>
            <person name="Basham D."/>
            <person name="Brown D."/>
            <person name="Chillingworth T."/>
            <person name="Connor R."/>
            <person name="Davies R.M."/>
            <person name="Devlin K."/>
            <person name="Feltwell T."/>
            <person name="Gentles S."/>
            <person name="Hamlin N."/>
            <person name="Holroyd S."/>
            <person name="Hornsby T."/>
            <person name="Jagels K."/>
            <person name="Krogh A."/>
            <person name="McLean J."/>
            <person name="Moule S."/>
            <person name="Murphy L.D."/>
            <person name="Oliver S."/>
            <person name="Osborne J."/>
            <person name="Quail M.A."/>
            <person name="Rajandream M.A."/>
            <person name="Rogers J."/>
            <person name="Rutter S."/>
            <person name="Seeger K."/>
            <person name="Skelton S."/>
            <person name="Squares S."/>
            <person name="Squares R."/>
            <person name="Sulston J.E."/>
            <person name="Taylor K."/>
            <person name="Whitehead S."/>
            <person name="Barrell B.G."/>
        </authorList>
    </citation>
    <scope>NUCLEOTIDE SEQUENCE [LARGE SCALE GENOMIC DNA]</scope>
    <source>
        <strain>ATCC 25618 / H37Rv</strain>
    </source>
</reference>
<reference key="2">
    <citation type="journal article" date="2011" name="Mol. Cell. Proteomics">
        <title>Proteogenomic analysis of Mycobacterium tuberculosis by high resolution mass spectrometry.</title>
        <authorList>
            <person name="Kelkar D.S."/>
            <person name="Kumar D."/>
            <person name="Kumar P."/>
            <person name="Balakrishnan L."/>
            <person name="Muthusamy B."/>
            <person name="Yadav A.K."/>
            <person name="Shrivastava P."/>
            <person name="Marimuthu A."/>
            <person name="Anand S."/>
            <person name="Sundaram H."/>
            <person name="Kingsbury R."/>
            <person name="Harsha H.C."/>
            <person name="Nair B."/>
            <person name="Prasad T.S."/>
            <person name="Chauhan D.S."/>
            <person name="Katoch K."/>
            <person name="Katoch V.M."/>
            <person name="Kumar P."/>
            <person name="Chaerkady R."/>
            <person name="Ramachandran S."/>
            <person name="Dash D."/>
            <person name="Pandey A."/>
        </authorList>
    </citation>
    <scope>IDENTIFICATION BY MASS SPECTROMETRY [LARGE SCALE ANALYSIS]</scope>
    <source>
        <strain>ATCC 25618 / H37Rv</strain>
    </source>
</reference>
<gene>
    <name evidence="1" type="primary">fdhD</name>
    <name type="ordered locus">Rv2899c</name>
    <name type="ORF">MTCY274.30c</name>
</gene>
<name>FDHD_MYCTU</name>
<comment type="function">
    <text evidence="1">Required for formate dehydrogenase (FDH) activity. Acts as a sulfur carrier protein that transfers sulfur from IscS to the molybdenum cofactor prior to its insertion into FDH.</text>
</comment>
<comment type="subcellular location">
    <subcellularLocation>
        <location evidence="1">Cytoplasm</location>
    </subcellularLocation>
</comment>
<comment type="similarity">
    <text evidence="1">Belongs to the FdhD family.</text>
</comment>
<accession>P9WNF1</accession>
<accession>L0TB72</accession>
<accession>P64118</accession>
<accession>Q10820</accession>
<proteinExistence type="evidence at protein level"/>
<evidence type="ECO:0000255" key="1">
    <source>
        <dbReference type="HAMAP-Rule" id="MF_00187"/>
    </source>
</evidence>
<feature type="chain" id="PRO_0000152912" description="Sulfur carrier protein FdhD">
    <location>
        <begin position="1"/>
        <end position="276"/>
    </location>
</feature>
<feature type="active site" description="Cysteine persulfide intermediate" evidence="1">
    <location>
        <position position="118"/>
    </location>
</feature>